<organism>
    <name type="scientific">Homo sapiens</name>
    <name type="common">Human</name>
    <dbReference type="NCBI Taxonomy" id="9606"/>
    <lineage>
        <taxon>Eukaryota</taxon>
        <taxon>Metazoa</taxon>
        <taxon>Chordata</taxon>
        <taxon>Craniata</taxon>
        <taxon>Vertebrata</taxon>
        <taxon>Euteleostomi</taxon>
        <taxon>Mammalia</taxon>
        <taxon>Eutheria</taxon>
        <taxon>Euarchontoglires</taxon>
        <taxon>Primates</taxon>
        <taxon>Haplorrhini</taxon>
        <taxon>Catarrhini</taxon>
        <taxon>Hominidae</taxon>
        <taxon>Homo</taxon>
    </lineage>
</organism>
<keyword id="KW-0025">Alternative splicing</keyword>
<keyword id="KW-0965">Cell junction</keyword>
<keyword id="KW-1003">Cell membrane</keyword>
<keyword id="KW-0966">Cell projection</keyword>
<keyword id="KW-0175">Coiled coil</keyword>
<keyword id="KW-0963">Cytoplasm</keyword>
<keyword id="KW-0206">Cytoskeleton</keyword>
<keyword id="KW-0967">Endosome</keyword>
<keyword id="KW-0440">LIM domain</keyword>
<keyword id="KW-0472">Membrane</keyword>
<keyword id="KW-0479">Metal-binding</keyword>
<keyword id="KW-0597">Phosphoprotein</keyword>
<keyword id="KW-1267">Proteomics identification</keyword>
<keyword id="KW-1185">Reference proteome</keyword>
<keyword id="KW-0796">Tight junction</keyword>
<keyword id="KW-0862">Zinc</keyword>
<dbReference type="EMBL" id="AL833704">
    <property type="protein sequence ID" value="CAD98087.1"/>
    <property type="molecule type" value="mRNA"/>
</dbReference>
<dbReference type="EMBL" id="AK027124">
    <property type="protein sequence ID" value="BAB15667.1"/>
    <property type="status" value="ALT_INIT"/>
    <property type="molecule type" value="mRNA"/>
</dbReference>
<dbReference type="EMBL" id="AK126808">
    <property type="protein sequence ID" value="BAC86702.1"/>
    <property type="molecule type" value="mRNA"/>
</dbReference>
<dbReference type="EMBL" id="AK074068">
    <property type="protein sequence ID" value="BAB84894.1"/>
    <property type="status" value="ALT_INIT"/>
    <property type="molecule type" value="mRNA"/>
</dbReference>
<dbReference type="EMBL" id="AC102953">
    <property type="status" value="NOT_ANNOTATED_CDS"/>
    <property type="molecule type" value="Genomic_DNA"/>
</dbReference>
<dbReference type="EMBL" id="CH471144">
    <property type="protein sequence ID" value="EAW87200.1"/>
    <property type="molecule type" value="Genomic_DNA"/>
</dbReference>
<dbReference type="EMBL" id="BC037988">
    <property type="protein sequence ID" value="AAH37988.1"/>
    <property type="molecule type" value="mRNA"/>
</dbReference>
<dbReference type="EMBL" id="BK000467">
    <property type="protein sequence ID" value="DAA01346.1"/>
    <property type="molecule type" value="mRNA"/>
</dbReference>
<dbReference type="CCDS" id="CCDS5324.1">
    <molecule id="Q8IY33-1"/>
</dbReference>
<dbReference type="RefSeq" id="NP_891554.1">
    <molecule id="Q8IY33-1"/>
    <property type="nucleotide sequence ID" value="NM_182924.4"/>
</dbReference>
<dbReference type="RefSeq" id="XP_047276793.1">
    <molecule id="Q8IY33-2"/>
    <property type="nucleotide sequence ID" value="XM_047420837.1"/>
</dbReference>
<dbReference type="SMR" id="Q8IY33"/>
<dbReference type="BioGRID" id="122879">
    <property type="interactions" value="145"/>
</dbReference>
<dbReference type="FunCoup" id="Q8IY33">
    <property type="interactions" value="406"/>
</dbReference>
<dbReference type="IntAct" id="Q8IY33">
    <property type="interactions" value="18"/>
</dbReference>
<dbReference type="STRING" id="9606.ENSP00000297508"/>
<dbReference type="GlyCosmos" id="Q8IY33">
    <property type="glycosylation" value="2 sites, 1 glycan"/>
</dbReference>
<dbReference type="GlyGen" id="Q8IY33">
    <property type="glycosylation" value="17 sites, 1 N-linked glycan (1 site), 1 O-linked glycan (13 sites)"/>
</dbReference>
<dbReference type="iPTMnet" id="Q8IY33"/>
<dbReference type="PhosphoSitePlus" id="Q8IY33"/>
<dbReference type="BioMuta" id="MICALL2"/>
<dbReference type="DMDM" id="46396456"/>
<dbReference type="jPOST" id="Q8IY33"/>
<dbReference type="MassIVE" id="Q8IY33"/>
<dbReference type="PaxDb" id="9606-ENSP00000297508"/>
<dbReference type="PeptideAtlas" id="Q8IY33"/>
<dbReference type="ProteomicsDB" id="12799"/>
<dbReference type="ProteomicsDB" id="71097">
    <molecule id="Q8IY33-1"/>
</dbReference>
<dbReference type="ProteomicsDB" id="71098">
    <molecule id="Q8IY33-2"/>
</dbReference>
<dbReference type="ProteomicsDB" id="71099">
    <molecule id="Q8IY33-3"/>
</dbReference>
<dbReference type="ProteomicsDB" id="71100">
    <molecule id="Q8IY33-4"/>
</dbReference>
<dbReference type="ProteomicsDB" id="71101">
    <molecule id="Q8IY33-5"/>
</dbReference>
<dbReference type="Pumba" id="Q8IY33"/>
<dbReference type="Antibodypedia" id="24191">
    <property type="antibodies" value="80 antibodies from 22 providers"/>
</dbReference>
<dbReference type="DNASU" id="79778"/>
<dbReference type="Ensembl" id="ENST00000297508.8">
    <molecule id="Q8IY33-1"/>
    <property type="protein sequence ID" value="ENSP00000297508.7"/>
    <property type="gene ID" value="ENSG00000164877.19"/>
</dbReference>
<dbReference type="Ensembl" id="ENST00000413446.5">
    <molecule id="Q8IY33-2"/>
    <property type="protein sequence ID" value="ENSP00000405415.1"/>
    <property type="gene ID" value="ENSG00000164877.19"/>
</dbReference>
<dbReference type="GeneID" id="79778"/>
<dbReference type="KEGG" id="hsa:79778"/>
<dbReference type="MANE-Select" id="ENST00000297508.8">
    <property type="protein sequence ID" value="ENSP00000297508.7"/>
    <property type="RefSeq nucleotide sequence ID" value="NM_182924.4"/>
    <property type="RefSeq protein sequence ID" value="NP_891554.1"/>
</dbReference>
<dbReference type="UCSC" id="uc003skj.5">
    <molecule id="Q8IY33-1"/>
    <property type="organism name" value="human"/>
</dbReference>
<dbReference type="AGR" id="HGNC:29672"/>
<dbReference type="CTD" id="79778"/>
<dbReference type="DisGeNET" id="79778"/>
<dbReference type="GeneCards" id="MICALL2"/>
<dbReference type="HGNC" id="HGNC:29672">
    <property type="gene designation" value="MICALL2"/>
</dbReference>
<dbReference type="HPA" id="ENSG00000164877">
    <property type="expression patterns" value="Low tissue specificity"/>
</dbReference>
<dbReference type="MalaCards" id="MICALL2"/>
<dbReference type="MIM" id="620912">
    <property type="type" value="gene"/>
</dbReference>
<dbReference type="neXtProt" id="NX_Q8IY33"/>
<dbReference type="OpenTargets" id="ENSG00000164877"/>
<dbReference type="PharmGKB" id="PA162395928"/>
<dbReference type="VEuPathDB" id="HostDB:ENSG00000164877"/>
<dbReference type="eggNOG" id="KOG0517">
    <property type="taxonomic scope" value="Eukaryota"/>
</dbReference>
<dbReference type="GeneTree" id="ENSGT00940000160222"/>
<dbReference type="HOGENOM" id="CLU_015382_0_0_1"/>
<dbReference type="InParanoid" id="Q8IY33"/>
<dbReference type="OMA" id="DWFQLIH"/>
<dbReference type="OrthoDB" id="10017054at2759"/>
<dbReference type="PAN-GO" id="Q8IY33">
    <property type="GO annotations" value="0 GO annotations based on evolutionary models"/>
</dbReference>
<dbReference type="PhylomeDB" id="Q8IY33"/>
<dbReference type="TreeFam" id="TF328311"/>
<dbReference type="PathwayCommons" id="Q8IY33"/>
<dbReference type="SignaLink" id="Q8IY33"/>
<dbReference type="BioGRID-ORCS" id="79778">
    <property type="hits" value="26 hits in 1153 CRISPR screens"/>
</dbReference>
<dbReference type="ChiTaRS" id="MICALL2">
    <property type="organism name" value="human"/>
</dbReference>
<dbReference type="GenomeRNAi" id="79778"/>
<dbReference type="Pharos" id="Q8IY33">
    <property type="development level" value="Tbio"/>
</dbReference>
<dbReference type="PRO" id="PR:Q8IY33"/>
<dbReference type="Proteomes" id="UP000005640">
    <property type="component" value="Chromosome 7"/>
</dbReference>
<dbReference type="RNAct" id="Q8IY33">
    <property type="molecule type" value="protein"/>
</dbReference>
<dbReference type="Bgee" id="ENSG00000164877">
    <property type="expression patterns" value="Expressed in tibial nerve and 138 other cell types or tissues"/>
</dbReference>
<dbReference type="GO" id="GO:0005923">
    <property type="term" value="C:bicellular tight junction"/>
    <property type="evidence" value="ECO:0000250"/>
    <property type="project" value="UniProtKB"/>
</dbReference>
<dbReference type="GO" id="GO:0005911">
    <property type="term" value="C:cell-cell junction"/>
    <property type="evidence" value="ECO:0000250"/>
    <property type="project" value="UniProtKB"/>
</dbReference>
<dbReference type="GO" id="GO:0043005">
    <property type="term" value="C:neuron projection"/>
    <property type="evidence" value="ECO:0000250"/>
    <property type="project" value="UniProtKB"/>
</dbReference>
<dbReference type="GO" id="GO:0005886">
    <property type="term" value="C:plasma membrane"/>
    <property type="evidence" value="ECO:0000250"/>
    <property type="project" value="UniProtKB"/>
</dbReference>
<dbReference type="GO" id="GO:0055037">
    <property type="term" value="C:recycling endosome"/>
    <property type="evidence" value="ECO:0000250"/>
    <property type="project" value="UniProtKB"/>
</dbReference>
<dbReference type="GO" id="GO:0001725">
    <property type="term" value="C:stress fiber"/>
    <property type="evidence" value="ECO:0007669"/>
    <property type="project" value="Ensembl"/>
</dbReference>
<dbReference type="GO" id="GO:0051015">
    <property type="term" value="F:actin filament binding"/>
    <property type="evidence" value="ECO:0000250"/>
    <property type="project" value="UniProtKB"/>
</dbReference>
<dbReference type="GO" id="GO:0042805">
    <property type="term" value="F:actinin binding"/>
    <property type="evidence" value="ECO:0007669"/>
    <property type="project" value="Ensembl"/>
</dbReference>
<dbReference type="GO" id="GO:0031005">
    <property type="term" value="F:filamin binding"/>
    <property type="evidence" value="ECO:0000314"/>
    <property type="project" value="UniProtKB"/>
</dbReference>
<dbReference type="GO" id="GO:0046872">
    <property type="term" value="F:metal ion binding"/>
    <property type="evidence" value="ECO:0007669"/>
    <property type="project" value="UniProtKB-KW"/>
</dbReference>
<dbReference type="GO" id="GO:0031267">
    <property type="term" value="F:small GTPase binding"/>
    <property type="evidence" value="ECO:0007669"/>
    <property type="project" value="Ensembl"/>
</dbReference>
<dbReference type="GO" id="GO:0030036">
    <property type="term" value="P:actin cytoskeleton organization"/>
    <property type="evidence" value="ECO:0000250"/>
    <property type="project" value="UniProtKB"/>
</dbReference>
<dbReference type="GO" id="GO:0030041">
    <property type="term" value="P:actin filament polymerization"/>
    <property type="evidence" value="ECO:0000250"/>
    <property type="project" value="UniProtKB"/>
</dbReference>
<dbReference type="GO" id="GO:0070830">
    <property type="term" value="P:bicellular tight junction assembly"/>
    <property type="evidence" value="ECO:0000250"/>
    <property type="project" value="UniProtKB"/>
</dbReference>
<dbReference type="GO" id="GO:0032456">
    <property type="term" value="P:endocytic recycling"/>
    <property type="evidence" value="ECO:0000250"/>
    <property type="project" value="UniProtKB"/>
</dbReference>
<dbReference type="GO" id="GO:0097750">
    <property type="term" value="P:endosome membrane tubulation"/>
    <property type="evidence" value="ECO:0007669"/>
    <property type="project" value="Ensembl"/>
</dbReference>
<dbReference type="GO" id="GO:0031175">
    <property type="term" value="P:neuron projection development"/>
    <property type="evidence" value="ECO:0000250"/>
    <property type="project" value="UniProtKB"/>
</dbReference>
<dbReference type="GO" id="GO:1903955">
    <property type="term" value="P:positive regulation of protein targeting to mitochondrion"/>
    <property type="evidence" value="ECO:0007001"/>
    <property type="project" value="ParkinsonsUK-UCL"/>
</dbReference>
<dbReference type="GO" id="GO:0032482">
    <property type="term" value="P:Rab protein signal transduction"/>
    <property type="evidence" value="ECO:0007669"/>
    <property type="project" value="Ensembl"/>
</dbReference>
<dbReference type="GO" id="GO:0034446">
    <property type="term" value="P:substrate adhesion-dependent cell spreading"/>
    <property type="evidence" value="ECO:0000250"/>
    <property type="project" value="UniProtKB"/>
</dbReference>
<dbReference type="CDD" id="cd21253">
    <property type="entry name" value="CH_MICALL2"/>
    <property type="match status" value="1"/>
</dbReference>
<dbReference type="CDD" id="cd09444">
    <property type="entry name" value="LIM_Mical_like_1"/>
    <property type="match status" value="1"/>
</dbReference>
<dbReference type="FunFam" id="1.10.418.10:FF:000055">
    <property type="entry name" value="MICAL-like protein 2"/>
    <property type="match status" value="1"/>
</dbReference>
<dbReference type="Gene3D" id="1.10.418.10">
    <property type="entry name" value="Calponin-like domain"/>
    <property type="match status" value="1"/>
</dbReference>
<dbReference type="Gene3D" id="2.10.110.10">
    <property type="entry name" value="Cysteine Rich Protein"/>
    <property type="match status" value="1"/>
</dbReference>
<dbReference type="InterPro" id="IPR022735">
    <property type="entry name" value="bMERB_dom"/>
</dbReference>
<dbReference type="InterPro" id="IPR001715">
    <property type="entry name" value="CH_dom"/>
</dbReference>
<dbReference type="InterPro" id="IPR036872">
    <property type="entry name" value="CH_dom_sf"/>
</dbReference>
<dbReference type="InterPro" id="IPR050540">
    <property type="entry name" value="F-actin_Monoox_Mical"/>
</dbReference>
<dbReference type="InterPro" id="IPR001781">
    <property type="entry name" value="Znf_LIM"/>
</dbReference>
<dbReference type="PANTHER" id="PTHR23167">
    <property type="entry name" value="CALPONIN HOMOLOGY DOMAIN-CONTAINING PROTEIN DDB_G0272472-RELATED"/>
    <property type="match status" value="1"/>
</dbReference>
<dbReference type="PANTHER" id="PTHR23167:SF87">
    <property type="entry name" value="MICAL-LIKE PROTEIN 2"/>
    <property type="match status" value="1"/>
</dbReference>
<dbReference type="Pfam" id="PF12130">
    <property type="entry name" value="bMERB_dom"/>
    <property type="match status" value="1"/>
</dbReference>
<dbReference type="Pfam" id="PF00307">
    <property type="entry name" value="CH"/>
    <property type="match status" value="1"/>
</dbReference>
<dbReference type="Pfam" id="PF00412">
    <property type="entry name" value="LIM"/>
    <property type="match status" value="1"/>
</dbReference>
<dbReference type="SMART" id="SM00033">
    <property type="entry name" value="CH"/>
    <property type="match status" value="1"/>
</dbReference>
<dbReference type="SMART" id="SM01203">
    <property type="entry name" value="DUF3585"/>
    <property type="match status" value="1"/>
</dbReference>
<dbReference type="SMART" id="SM00132">
    <property type="entry name" value="LIM"/>
    <property type="match status" value="1"/>
</dbReference>
<dbReference type="SUPFAM" id="SSF47576">
    <property type="entry name" value="Calponin-homology domain, CH-domain"/>
    <property type="match status" value="1"/>
</dbReference>
<dbReference type="SUPFAM" id="SSF57716">
    <property type="entry name" value="Glucocorticoid receptor-like (DNA-binding domain)"/>
    <property type="match status" value="2"/>
</dbReference>
<dbReference type="PROSITE" id="PS51848">
    <property type="entry name" value="BMERB"/>
    <property type="match status" value="1"/>
</dbReference>
<dbReference type="PROSITE" id="PS50021">
    <property type="entry name" value="CH"/>
    <property type="match status" value="1"/>
</dbReference>
<dbReference type="PROSITE" id="PS00478">
    <property type="entry name" value="LIM_DOMAIN_1"/>
    <property type="match status" value="1"/>
</dbReference>
<dbReference type="PROSITE" id="PS50023">
    <property type="entry name" value="LIM_DOMAIN_2"/>
    <property type="match status" value="1"/>
</dbReference>
<proteinExistence type="evidence at protein level"/>
<feature type="chain" id="PRO_0000075850" description="MICAL-like protein 2">
    <location>
        <begin position="1"/>
        <end position="904"/>
    </location>
</feature>
<feature type="domain" description="Calponin-homology (CH)" evidence="4">
    <location>
        <begin position="1"/>
        <end position="107"/>
    </location>
</feature>
<feature type="domain" description="LIM zinc-binding" evidence="5">
    <location>
        <begin position="186"/>
        <end position="248"/>
    </location>
</feature>
<feature type="domain" description="bMERB" evidence="6">
    <location>
        <begin position="723"/>
        <end position="874"/>
    </location>
</feature>
<feature type="region of interest" description="Forms an intramolecular interaction with the C-terminal coiled coil domain keeping the protein in a closed conformation" evidence="1">
    <location>
        <begin position="1"/>
        <end position="260"/>
    </location>
</feature>
<feature type="region of interest" description="Disordered" evidence="7">
    <location>
        <begin position="117"/>
        <end position="178"/>
    </location>
</feature>
<feature type="region of interest" description="Disordered" evidence="7">
    <location>
        <begin position="251"/>
        <end position="722"/>
    </location>
</feature>
<feature type="region of interest" description="Mediates targeting to the cell plasma membrane" evidence="1">
    <location>
        <begin position="261"/>
        <end position="697"/>
    </location>
</feature>
<feature type="region of interest" description="Necessary and sufficient for interaction with actinins" evidence="1">
    <location>
        <begin position="261"/>
        <end position="388"/>
    </location>
</feature>
<feature type="region of interest" description="Forms an intramolecular interaction with the N-terminal Calponin-homology and LIM zinc-binding domains-containing region keeping the protein in a closed conformation" evidence="1">
    <location>
        <begin position="698"/>
        <end position="807"/>
    </location>
</feature>
<feature type="region of interest" description="Mediates interaction with RAB13 and is required for transition from the closed to the opened conformation" evidence="1">
    <location>
        <begin position="807"/>
        <end position="903"/>
    </location>
</feature>
<feature type="coiled-coil region" evidence="3">
    <location>
        <begin position="735"/>
        <end position="771"/>
    </location>
</feature>
<feature type="compositionally biased region" description="Pro residues" evidence="7">
    <location>
        <begin position="143"/>
        <end position="153"/>
    </location>
</feature>
<feature type="compositionally biased region" description="Polar residues" evidence="7">
    <location>
        <begin position="267"/>
        <end position="277"/>
    </location>
</feature>
<feature type="compositionally biased region" description="Low complexity" evidence="7">
    <location>
        <begin position="293"/>
        <end position="314"/>
    </location>
</feature>
<feature type="compositionally biased region" description="Low complexity" evidence="7">
    <location>
        <begin position="349"/>
        <end position="362"/>
    </location>
</feature>
<feature type="compositionally biased region" description="Pro residues" evidence="7">
    <location>
        <begin position="363"/>
        <end position="374"/>
    </location>
</feature>
<feature type="compositionally biased region" description="Low complexity" evidence="7">
    <location>
        <begin position="385"/>
        <end position="400"/>
    </location>
</feature>
<feature type="compositionally biased region" description="Polar residues" evidence="7">
    <location>
        <begin position="408"/>
        <end position="433"/>
    </location>
</feature>
<feature type="compositionally biased region" description="Low complexity" evidence="7">
    <location>
        <begin position="459"/>
        <end position="480"/>
    </location>
</feature>
<feature type="compositionally biased region" description="Low complexity" evidence="7">
    <location>
        <begin position="520"/>
        <end position="534"/>
    </location>
</feature>
<feature type="compositionally biased region" description="Low complexity" evidence="7">
    <location>
        <begin position="542"/>
        <end position="553"/>
    </location>
</feature>
<feature type="compositionally biased region" description="Polar residues" evidence="7">
    <location>
        <begin position="564"/>
        <end position="578"/>
    </location>
</feature>
<feature type="compositionally biased region" description="Basic and acidic residues" evidence="7">
    <location>
        <begin position="593"/>
        <end position="622"/>
    </location>
</feature>
<feature type="compositionally biased region" description="Pro residues" evidence="7">
    <location>
        <begin position="647"/>
        <end position="661"/>
    </location>
</feature>
<feature type="modified residue" description="Phosphoserine" evidence="17">
    <location>
        <position position="110"/>
    </location>
</feature>
<feature type="modified residue" description="Phosphoserine" evidence="15 17 18">
    <location>
        <position position="143"/>
    </location>
</feature>
<feature type="modified residue" description="Phosphoserine" evidence="17 18">
    <location>
        <position position="153"/>
    </location>
</feature>
<feature type="modified residue" description="Phosphoserine" evidence="17">
    <location>
        <position position="249"/>
    </location>
</feature>
<feature type="modified residue" description="Phosphoserine" evidence="17">
    <location>
        <position position="294"/>
    </location>
</feature>
<feature type="modified residue" description="Phosphoserine" evidence="16 17">
    <location>
        <position position="494"/>
    </location>
</feature>
<feature type="modified residue" description="Phosphoserine" evidence="17">
    <location>
        <position position="504"/>
    </location>
</feature>
<feature type="modified residue" description="Phosphoserine" evidence="17">
    <location>
        <position position="598"/>
    </location>
</feature>
<feature type="modified residue" description="Phosphothreonine" evidence="18">
    <location>
        <position position="644"/>
    </location>
</feature>
<feature type="modified residue" description="Phosphoserine" evidence="16 17">
    <location>
        <position position="649"/>
    </location>
</feature>
<feature type="modified residue" description="Phosphoserine" evidence="16">
    <location>
        <position position="658"/>
    </location>
</feature>
<feature type="modified residue" description="Phosphoserine" evidence="16">
    <location>
        <position position="660"/>
    </location>
</feature>
<feature type="modified residue" description="Phosphoserine" evidence="2">
    <location>
        <position position="726"/>
    </location>
</feature>
<feature type="splice variant" id="VSP_009856" description="In isoform 3." evidence="10">
    <original>MAAIRALQQWCRQQCEGYRDVNICNMTTSFRDGLAFCAILHRHRPDLINFSALKKENIYENNKLAFRVAEEHLGIPALLDAEDMVALKVPDRLSILTYVSQYYNYFHGRSPIGGMAGVKRASEDSEEEPSGKKAPVQAAKLPSPAPARKPPLSPAQTNPVVQRRNEGAGGPPPKTDQALAGSLVSSTCGVCGKHVHLVQRHLADGRLYHRSCFRCKQCSCTLHSGAYKATGEPGTFVCTSHLPAAASASPKLTGLVPRQPGAMGVDSRTSCSPQKAQEANKARPSAWEPAAGNSPARASVPAAPNPAATSATSVHVRSPARPSESRLAPTPTEGKVRPRVTNSSPMGWSSAAPCTAAAASHPAVPPSAPDPRPATPQGGGAPRVAAPQTTLSSSSTSAATVDPPAWTPSASRTQQARNKFFQTSAVPPGTSLSGRGPTPSLVLSKDSSKEQARNFLKQALSALEEAGAPAPGRPSPATAAVPSSQPKTEAPQASPLAKPLQSSSPRVLGLPSRMEPPAPLSTSSTSQASALPPAGRRNLAESSGVGRVGAGSRPKPEAPMAKGKSTTLTQ</original>
    <variation>MALSSWAQGTSWAAKGFSRSFSLAEFSLLKPRAGSCRTQEPRKPADGQPWLRCSPCTGGQRIWVHGAHPATSPPIRQKGKLRPRGRESFPQGHTAQESQLGAPPLTPCPVLLMPPGRLAVGVSEGGVAMGRWQGEAQPPLQTPHSQHSFLTPRPLASHP</variation>
    <location>
        <begin position="1"/>
        <end position="570"/>
    </location>
</feature>
<feature type="splice variant" id="VSP_009854" description="In isoform 2." evidence="11">
    <original>MAAIRALQQWCRQQCEGYRDVNICNMTTSFRDGLAFCAILHRHRPDLI</original>
    <variation>MFLSSR</variation>
    <location>
        <begin position="1"/>
        <end position="48"/>
    </location>
</feature>
<feature type="splice variant" id="VSP_009858" description="In isoform 5." evidence="10">
    <location>
        <begin position="29"/>
        <end position="240"/>
    </location>
</feature>
<feature type="splice variant" id="VSP_009857" description="In isoform 4." evidence="12">
    <original>DMSTSLQEGQEDGPAGWRANLKPVDRRSPAERTLKPKEPRALAEPRAGEAPRKVSGSFAGSVHITLTPVRPDRTPRPASPGPSLPARSPSPPRRRRLAVPASLDVCDNWLRPEPPGQEARVQSWKEEEKKPHLQGKPGRPLSPANVPALPGETVTSPVRLHPDYLSPEEIQRQLQDIERRLDALELRGVELEKRLRAAEGDDAEDSLMVDWFWLIHEKQLLLRQESELMYKSKAQRLEEQQLDIEGELRRLMAKPEALKSLQERRREQELLEQYVSTVNDRSDIVDSLDEDRLREQEEDQMLRDMIEKLGLQRKKSKFRLSKIWSPKSKSSPSQ</original>
    <variation>GE</variation>
    <location>
        <begin position="571"/>
        <end position="904"/>
    </location>
</feature>
<feature type="splice variant" id="VSP_009855" description="In isoform 2." evidence="11">
    <original>ARSPSPPRRRRLAVPASLDVCDNWLRPEPPGQEARVQSWKEEEKKPHLQGKPGRPLSPANVPALPGETVTSPVRLHPDYLSPEEIQRQLQDIERRLDALELRGVELEKRLRAAEGDDAEDSLMVDWFWLIHEKQLLLRQESELMYKSKAQRLEEQQLDIEGELRRLMAKPEALKSLQERRREQELLEQYVSTVNDRSDIVDSLDEDRLREQEEDQMLRDMIEKLGLQRKKSKFRLSKIWSPKSKSSPSQ</original>
    <variation>GPPPHPAAGDWPSLPASTFVTTGFGRSPLARKPECRAGRRRRRNLTFRANQGDPCPRPMSLLCLARR</variation>
    <location>
        <begin position="656"/>
        <end position="904"/>
    </location>
</feature>
<feature type="sequence variant" id="VAR_034071" description="In dbSNP:rs12540098.">
    <original>A</original>
    <variation>P</variation>
    <location>
        <position position="480"/>
    </location>
</feature>
<feature type="sequence variant" id="VAR_034072" description="In dbSNP:rs4075307.">
    <original>P</original>
    <variation>L</variation>
    <location>
        <position position="519"/>
    </location>
</feature>
<feature type="sequence variant" id="VAR_061356" description="In dbSNP:rs61287564.">
    <original>K</original>
    <variation>R</variation>
    <location>
        <position position="623"/>
    </location>
</feature>
<feature type="sequence variant" id="VAR_050159" description="In dbSNP:rs11980797.">
    <original>L</original>
    <variation>V</variation>
    <location>
        <position position="711"/>
    </location>
</feature>
<feature type="sequence conflict" description="In Ref. 1; CAD98087." evidence="13" ref="1">
    <original>L</original>
    <variation>M</variation>
    <location>
        <position position="255"/>
    </location>
</feature>
<feature type="sequence conflict" description="In Ref. 2; BAB15667." evidence="13" ref="2">
    <original>S</original>
    <variation>L</variation>
    <location>
        <position position="285"/>
    </location>
</feature>
<feature type="sequence conflict" description="In Ref. 2; BAB15667." evidence="13" ref="2">
    <original>K</original>
    <variation>R</variation>
    <location>
        <position position="706"/>
    </location>
</feature>
<evidence type="ECO:0000250" key="1"/>
<evidence type="ECO:0000250" key="2">
    <source>
        <dbReference type="UniProtKB" id="Q3TN34"/>
    </source>
</evidence>
<evidence type="ECO:0000255" key="3"/>
<evidence type="ECO:0000255" key="4">
    <source>
        <dbReference type="PROSITE-ProRule" id="PRU00044"/>
    </source>
</evidence>
<evidence type="ECO:0000255" key="5">
    <source>
        <dbReference type="PROSITE-ProRule" id="PRU00125"/>
    </source>
</evidence>
<evidence type="ECO:0000255" key="6">
    <source>
        <dbReference type="PROSITE-ProRule" id="PRU01195"/>
    </source>
</evidence>
<evidence type="ECO:0000256" key="7">
    <source>
        <dbReference type="SAM" id="MobiDB-lite"/>
    </source>
</evidence>
<evidence type="ECO:0000269" key="8">
    <source>
    </source>
</evidence>
<evidence type="ECO:0000269" key="9">
    <source>
    </source>
</evidence>
<evidence type="ECO:0000303" key="10">
    <source>
    </source>
</evidence>
<evidence type="ECO:0000303" key="11">
    <source>
    </source>
</evidence>
<evidence type="ECO:0000303" key="12">
    <source ref="1"/>
</evidence>
<evidence type="ECO:0000305" key="13"/>
<evidence type="ECO:0000312" key="14">
    <source>
        <dbReference type="HGNC" id="HGNC:29672"/>
    </source>
</evidence>
<evidence type="ECO:0007744" key="15">
    <source>
    </source>
</evidence>
<evidence type="ECO:0007744" key="16">
    <source>
    </source>
</evidence>
<evidence type="ECO:0007744" key="17">
    <source>
    </source>
</evidence>
<evidence type="ECO:0007744" key="18">
    <source>
    </source>
</evidence>
<gene>
    <name evidence="14" type="primary">MICALL2</name>
    <name type="synonym">JRAB</name>
</gene>
<protein>
    <recommendedName>
        <fullName>MICAL-like protein 2</fullName>
    </recommendedName>
    <alternativeName>
        <fullName>Junctional Rab13-binding protein</fullName>
    </alternativeName>
    <alternativeName>
        <fullName>Molecule interacting with CasL-like 2</fullName>
        <shortName>MICAL-L2</shortName>
    </alternativeName>
</protein>
<accession>Q8IY33</accession>
<accession>D3YTD2</accession>
<accession>Q7RTP4</accession>
<accession>Q7Z655</accession>
<accession>Q8TEQ4</accession>
<accession>Q9H5F9</accession>
<sequence>MAAIRALQQWCRQQCEGYRDVNICNMTTSFRDGLAFCAILHRHRPDLINFSALKKENIYENNKLAFRVAEEHLGIPALLDAEDMVALKVPDRLSILTYVSQYYNYFHGRSPIGGMAGVKRASEDSEEEPSGKKAPVQAAKLPSPAPARKPPLSPAQTNPVVQRRNEGAGGPPPKTDQALAGSLVSSTCGVCGKHVHLVQRHLADGRLYHRSCFRCKQCSCTLHSGAYKATGEPGTFVCTSHLPAAASASPKLTGLVPRQPGAMGVDSRTSCSPQKAQEANKARPSAWEPAAGNSPARASVPAAPNPAATSATSVHVRSPARPSESRLAPTPTEGKVRPRVTNSSPMGWSSAAPCTAAAASHPAVPPSAPDPRPATPQGGGAPRVAAPQTTLSSSSTSAATVDPPAWTPSASRTQQARNKFFQTSAVPPGTSLSGRGPTPSLVLSKDSSKEQARNFLKQALSALEEAGAPAPGRPSPATAAVPSSQPKTEAPQASPLAKPLQSSSPRVLGLPSRMEPPAPLSTSSTSQASALPPAGRRNLAESSGVGRVGAGSRPKPEAPMAKGKSTTLTQDMSTSLQEGQEDGPAGWRANLKPVDRRSPAERTLKPKEPRALAEPRAGEAPRKVSGSFAGSVHITLTPVRPDRTPRPASPGPSLPARSPSPPRRRRLAVPASLDVCDNWLRPEPPGQEARVQSWKEEEKKPHLQGKPGRPLSPANVPALPGETVTSPVRLHPDYLSPEEIQRQLQDIERRLDALELRGVELEKRLRAAEGDDAEDSLMVDWFWLIHEKQLLLRQESELMYKSKAQRLEEQQLDIEGELRRLMAKPEALKSLQERRREQELLEQYVSTVNDRSDIVDSLDEDRLREQEEDQMLRDMIEKLGLQRKKSKFRLSKIWSPKSKSSPSQ</sequence>
<name>MILK2_HUMAN</name>
<comment type="function">
    <text evidence="1 2">Effector of small Rab GTPases which is involved in junctional complexes assembly through the regulation of cell adhesion molecules transport to the plasma membrane and actin cytoskeleton reorganization. Regulates the endocytic recycling of occludins, claudins and E-cadherin to the plasma membrane and may thereby regulate the establishment of tight junctions and adherens junctions. In parallel, may regulate actin cytoskeleton reorganization directly through interaction with F-actin or indirectly through actinins and filamins. Most probably involved in the processes of epithelial cell differentiation, cell spreading and neurite outgrowth (By similarity). Undergoes liquid-liquid phase separation to form tubular recycling endosomes. Plays 2 sequential roles in the biogenesis of tubular recycling endosomes: first organizes phase separation and then the closed form formed by interaction with RAB8A promotes endosomal tubulation (By similarity).</text>
</comment>
<comment type="subunit">
    <text evidence="2 8 9">Interacts with RAB13 (GTP-bound form); competes with RAB8A and is involved in tight junctions assembly. Interacts with RAB8A; competes with RAB13 and is involved in E-cadherin endocytic recycling (By similarity). Interacts with RAB8B (By similarity). Interacts (preferentially in opened conformation) with ACTN1 and ACTN4; stimulated by RAB13 activation (By similarity). Interacts (via calponin-homology (CH) domain) with the filamins FLNA, FLNB and FLNC (via actin-binding domain).</text>
</comment>
<comment type="interaction">
    <interactant intactId="EBI-2555563">
        <id>Q8IY33</id>
    </interactant>
    <interactant intactId="EBI-351710">
        <id>P12814</id>
        <label>ACTN1</label>
    </interactant>
    <organismsDiffer>false</organismsDiffer>
    <experiments>6</experiments>
</comment>
<comment type="interaction">
    <interactant intactId="EBI-2555563">
        <id>Q8IY33</id>
    </interactant>
    <interactant intactId="EBI-77797">
        <id>P35609</id>
        <label>ACTN2</label>
    </interactant>
    <organismsDiffer>false</organismsDiffer>
    <experiments>7</experiments>
</comment>
<comment type="interaction">
    <interactant intactId="EBI-2555563">
        <id>Q8IY33</id>
    </interactant>
    <interactant intactId="EBI-2880652">
        <id>Q08043</id>
        <label>ACTN3</label>
    </interactant>
    <organismsDiffer>false</organismsDiffer>
    <experiments>3</experiments>
</comment>
<comment type="interaction">
    <interactant intactId="EBI-2555563">
        <id>Q8IY33</id>
    </interactant>
    <interactant intactId="EBI-351526">
        <id>O43707</id>
        <label>ACTN4</label>
    </interactant>
    <organismsDiffer>false</organismsDiffer>
    <experiments>3</experiments>
</comment>
<comment type="interaction">
    <interactant intactId="EBI-2555563">
        <id>Q8IY33</id>
    </interactant>
    <interactant intactId="EBI-1181367">
        <id>Q01850</id>
        <label>CDR2</label>
    </interactant>
    <organismsDiffer>false</organismsDiffer>
    <experiments>3</experiments>
</comment>
<comment type="interaction">
    <interactant intactId="EBI-2555563">
        <id>Q8IY33</id>
    </interactant>
    <interactant intactId="EBI-10303987">
        <id>Q9UHG0</id>
        <label>DCDC2</label>
    </interactant>
    <organismsDiffer>false</organismsDiffer>
    <experiments>3</experiments>
</comment>
<comment type="subcellular location">
    <subcellularLocation>
        <location evidence="2">Cell membrane</location>
        <topology evidence="2">Peripheral membrane protein</topology>
    </subcellularLocation>
    <subcellularLocation>
        <location evidence="2">Cell junction</location>
        <location evidence="2">Tight junction</location>
    </subcellularLocation>
    <subcellularLocation>
        <location evidence="2">Recycling endosome</location>
    </subcellularLocation>
    <subcellularLocation>
        <location evidence="2">Cell projection</location>
    </subcellularLocation>
    <subcellularLocation>
        <location evidence="2">Cytoplasm</location>
        <location evidence="2">Cytoskeleton</location>
    </subcellularLocation>
</comment>
<comment type="alternative products">
    <event type="alternative splicing"/>
    <isoform>
        <id>Q8IY33-1</id>
        <name>1</name>
        <sequence type="displayed"/>
    </isoform>
    <isoform>
        <id>Q8IY33-2</id>
        <name>2</name>
        <sequence type="described" ref="VSP_009854 VSP_009855"/>
    </isoform>
    <isoform>
        <id>Q8IY33-3</id>
        <name>3</name>
        <sequence type="described" ref="VSP_009856"/>
    </isoform>
    <isoform>
        <id>Q8IY33-4</id>
        <name>4</name>
        <sequence type="described" ref="VSP_009857"/>
    </isoform>
    <isoform>
        <id>Q8IY33-5</id>
        <name>5</name>
        <sequence type="described" ref="VSP_009858"/>
    </isoform>
</comment>
<comment type="domain">
    <text evidence="2">Exists in a closed and an open conformation due to interaction of the C-terminal coiled-coil domain with an N-terminal region including the calponin-homology (CH) and the LIM zinc-binding domain. The conformational change is regulated by RAB13 and RAB8A. Adopts its closed form upon interaction with RAB8A and interaction with RAB13 causes conformational change from closed to open.</text>
</comment>
<comment type="sequence caution" evidence="13">
    <conflict type="erroneous initiation">
        <sequence resource="EMBL-CDS" id="BAB15667"/>
    </conflict>
    <text>Extended N-terminus.</text>
</comment>
<comment type="sequence caution" evidence="13">
    <conflict type="erroneous initiation">
        <sequence resource="EMBL-CDS" id="BAB84894"/>
    </conflict>
    <text>Extended N-terminus.</text>
</comment>
<reference key="1">
    <citation type="submission" date="2002-01" db="EMBL/GenBank/DDBJ databases">
        <title>The nucleotide sequence of a long cDNA clone isolated from human spleen.</title>
        <authorList>
            <person name="Jikuya H."/>
            <person name="Takano J."/>
            <person name="Nomura N."/>
            <person name="Kikuno R."/>
            <person name="Nagase T."/>
            <person name="Ohara O."/>
        </authorList>
    </citation>
    <scope>NUCLEOTIDE SEQUENCE [LARGE SCALE MRNA] (ISOFORM 4)</scope>
    <source>
        <tissue>Spleen</tissue>
    </source>
</reference>
<reference key="2">
    <citation type="journal article" date="2004" name="Nat. Genet.">
        <title>Complete sequencing and characterization of 21,243 full-length human cDNAs.</title>
        <authorList>
            <person name="Ota T."/>
            <person name="Suzuki Y."/>
            <person name="Nishikawa T."/>
            <person name="Otsuki T."/>
            <person name="Sugiyama T."/>
            <person name="Irie R."/>
            <person name="Wakamatsu A."/>
            <person name="Hayashi K."/>
            <person name="Sato H."/>
            <person name="Nagai K."/>
            <person name="Kimura K."/>
            <person name="Makita H."/>
            <person name="Sekine M."/>
            <person name="Obayashi M."/>
            <person name="Nishi T."/>
            <person name="Shibahara T."/>
            <person name="Tanaka T."/>
            <person name="Ishii S."/>
            <person name="Yamamoto J."/>
            <person name="Saito K."/>
            <person name="Kawai Y."/>
            <person name="Isono Y."/>
            <person name="Nakamura Y."/>
            <person name="Nagahari K."/>
            <person name="Murakami K."/>
            <person name="Yasuda T."/>
            <person name="Iwayanagi T."/>
            <person name="Wagatsuma M."/>
            <person name="Shiratori A."/>
            <person name="Sudo H."/>
            <person name="Hosoiri T."/>
            <person name="Kaku Y."/>
            <person name="Kodaira H."/>
            <person name="Kondo H."/>
            <person name="Sugawara M."/>
            <person name="Takahashi M."/>
            <person name="Kanda K."/>
            <person name="Yokoi T."/>
            <person name="Furuya T."/>
            <person name="Kikkawa E."/>
            <person name="Omura Y."/>
            <person name="Abe K."/>
            <person name="Kamihara K."/>
            <person name="Katsuta N."/>
            <person name="Sato K."/>
            <person name="Tanikawa M."/>
            <person name="Yamazaki M."/>
            <person name="Ninomiya K."/>
            <person name="Ishibashi T."/>
            <person name="Yamashita H."/>
            <person name="Murakawa K."/>
            <person name="Fujimori K."/>
            <person name="Tanai H."/>
            <person name="Kimata M."/>
            <person name="Watanabe M."/>
            <person name="Hiraoka S."/>
            <person name="Chiba Y."/>
            <person name="Ishida S."/>
            <person name="Ono Y."/>
            <person name="Takiguchi S."/>
            <person name="Watanabe S."/>
            <person name="Yosida M."/>
            <person name="Hotuta T."/>
            <person name="Kusano J."/>
            <person name="Kanehori K."/>
            <person name="Takahashi-Fujii A."/>
            <person name="Hara H."/>
            <person name="Tanase T.-O."/>
            <person name="Nomura Y."/>
            <person name="Togiya S."/>
            <person name="Komai F."/>
            <person name="Hara R."/>
            <person name="Takeuchi K."/>
            <person name="Arita M."/>
            <person name="Imose N."/>
            <person name="Musashino K."/>
            <person name="Yuuki H."/>
            <person name="Oshima A."/>
            <person name="Sasaki N."/>
            <person name="Aotsuka S."/>
            <person name="Yoshikawa Y."/>
            <person name="Matsunawa H."/>
            <person name="Ichihara T."/>
            <person name="Shiohata N."/>
            <person name="Sano S."/>
            <person name="Moriya S."/>
            <person name="Momiyama H."/>
            <person name="Satoh N."/>
            <person name="Takami S."/>
            <person name="Terashima Y."/>
            <person name="Suzuki O."/>
            <person name="Nakagawa S."/>
            <person name="Senoh A."/>
            <person name="Mizoguchi H."/>
            <person name="Goto Y."/>
            <person name="Shimizu F."/>
            <person name="Wakebe H."/>
            <person name="Hishigaki H."/>
            <person name="Watanabe T."/>
            <person name="Sugiyama A."/>
            <person name="Takemoto M."/>
            <person name="Kawakami B."/>
            <person name="Yamazaki M."/>
            <person name="Watanabe K."/>
            <person name="Kumagai A."/>
            <person name="Itakura S."/>
            <person name="Fukuzumi Y."/>
            <person name="Fujimori Y."/>
            <person name="Komiyama M."/>
            <person name="Tashiro H."/>
            <person name="Tanigami A."/>
            <person name="Fujiwara T."/>
            <person name="Ono T."/>
            <person name="Yamada K."/>
            <person name="Fujii Y."/>
            <person name="Ozaki K."/>
            <person name="Hirao M."/>
            <person name="Ohmori Y."/>
            <person name="Kawabata A."/>
            <person name="Hikiji T."/>
            <person name="Kobatake N."/>
            <person name="Inagaki H."/>
            <person name="Ikema Y."/>
            <person name="Okamoto S."/>
            <person name="Okitani R."/>
            <person name="Kawakami T."/>
            <person name="Noguchi S."/>
            <person name="Itoh T."/>
            <person name="Shigeta K."/>
            <person name="Senba T."/>
            <person name="Matsumura K."/>
            <person name="Nakajima Y."/>
            <person name="Mizuno T."/>
            <person name="Morinaga M."/>
            <person name="Sasaki M."/>
            <person name="Togashi T."/>
            <person name="Oyama M."/>
            <person name="Hata H."/>
            <person name="Watanabe M."/>
            <person name="Komatsu T."/>
            <person name="Mizushima-Sugano J."/>
            <person name="Satoh T."/>
            <person name="Shirai Y."/>
            <person name="Takahashi Y."/>
            <person name="Nakagawa K."/>
            <person name="Okumura K."/>
            <person name="Nagase T."/>
            <person name="Nomura N."/>
            <person name="Kikuchi H."/>
            <person name="Masuho Y."/>
            <person name="Yamashita R."/>
            <person name="Nakai K."/>
            <person name="Yada T."/>
            <person name="Nakamura Y."/>
            <person name="Ohara O."/>
            <person name="Isogai T."/>
            <person name="Sugano S."/>
        </authorList>
    </citation>
    <scope>NUCLEOTIDE SEQUENCE [LARGE SCALE MRNA] (ISOFORMS 3 AND 5)</scope>
    <source>
        <tissue>Brain cortex</tissue>
        <tissue>Small intestine</tissue>
    </source>
</reference>
<reference key="3">
    <citation type="journal article" date="2007" name="BMC Genomics">
        <title>The full-ORF clone resource of the German cDNA consortium.</title>
        <authorList>
            <person name="Bechtel S."/>
            <person name="Rosenfelder H."/>
            <person name="Duda A."/>
            <person name="Schmidt C.P."/>
            <person name="Ernst U."/>
            <person name="Wellenreuther R."/>
            <person name="Mehrle A."/>
            <person name="Schuster C."/>
            <person name="Bahr A."/>
            <person name="Bloecker H."/>
            <person name="Heubner D."/>
            <person name="Hoerlein A."/>
            <person name="Michel G."/>
            <person name="Wedler H."/>
            <person name="Koehrer K."/>
            <person name="Ottenwaelder B."/>
            <person name="Poustka A."/>
            <person name="Wiemann S."/>
            <person name="Schupp I."/>
        </authorList>
    </citation>
    <scope>NUCLEOTIDE SEQUENCE [LARGE SCALE MRNA] (ISOFORM 2)</scope>
    <source>
        <tissue>Lymph node</tissue>
    </source>
</reference>
<reference key="4">
    <citation type="journal article" date="2003" name="Nature">
        <title>The DNA sequence of human chromosome 7.</title>
        <authorList>
            <person name="Hillier L.W."/>
            <person name="Fulton R.S."/>
            <person name="Fulton L.A."/>
            <person name="Graves T.A."/>
            <person name="Pepin K.H."/>
            <person name="Wagner-McPherson C."/>
            <person name="Layman D."/>
            <person name="Maas J."/>
            <person name="Jaeger S."/>
            <person name="Walker R."/>
            <person name="Wylie K."/>
            <person name="Sekhon M."/>
            <person name="Becker M.C."/>
            <person name="O'Laughlin M.D."/>
            <person name="Schaller M.E."/>
            <person name="Fewell G.A."/>
            <person name="Delehaunty K.D."/>
            <person name="Miner T.L."/>
            <person name="Nash W.E."/>
            <person name="Cordes M."/>
            <person name="Du H."/>
            <person name="Sun H."/>
            <person name="Edwards J."/>
            <person name="Bradshaw-Cordum H."/>
            <person name="Ali J."/>
            <person name="Andrews S."/>
            <person name="Isak A."/>
            <person name="Vanbrunt A."/>
            <person name="Nguyen C."/>
            <person name="Du F."/>
            <person name="Lamar B."/>
            <person name="Courtney L."/>
            <person name="Kalicki J."/>
            <person name="Ozersky P."/>
            <person name="Bielicki L."/>
            <person name="Scott K."/>
            <person name="Holmes A."/>
            <person name="Harkins R."/>
            <person name="Harris A."/>
            <person name="Strong C.M."/>
            <person name="Hou S."/>
            <person name="Tomlinson C."/>
            <person name="Dauphin-Kohlberg S."/>
            <person name="Kozlowicz-Reilly A."/>
            <person name="Leonard S."/>
            <person name="Rohlfing T."/>
            <person name="Rock S.M."/>
            <person name="Tin-Wollam A.-M."/>
            <person name="Abbott A."/>
            <person name="Minx P."/>
            <person name="Maupin R."/>
            <person name="Strowmatt C."/>
            <person name="Latreille P."/>
            <person name="Miller N."/>
            <person name="Johnson D."/>
            <person name="Murray J."/>
            <person name="Woessner J.P."/>
            <person name="Wendl M.C."/>
            <person name="Yang S.-P."/>
            <person name="Schultz B.R."/>
            <person name="Wallis J.W."/>
            <person name="Spieth J."/>
            <person name="Bieri T.A."/>
            <person name="Nelson J.O."/>
            <person name="Berkowicz N."/>
            <person name="Wohldmann P.E."/>
            <person name="Cook L.L."/>
            <person name="Hickenbotham M.T."/>
            <person name="Eldred J."/>
            <person name="Williams D."/>
            <person name="Bedell J.A."/>
            <person name="Mardis E.R."/>
            <person name="Clifton S.W."/>
            <person name="Chissoe S.L."/>
            <person name="Marra M.A."/>
            <person name="Raymond C."/>
            <person name="Haugen E."/>
            <person name="Gillett W."/>
            <person name="Zhou Y."/>
            <person name="James R."/>
            <person name="Phelps K."/>
            <person name="Iadanoto S."/>
            <person name="Bubb K."/>
            <person name="Simms E."/>
            <person name="Levy R."/>
            <person name="Clendenning J."/>
            <person name="Kaul R."/>
            <person name="Kent W.J."/>
            <person name="Furey T.S."/>
            <person name="Baertsch R.A."/>
            <person name="Brent M.R."/>
            <person name="Keibler E."/>
            <person name="Flicek P."/>
            <person name="Bork P."/>
            <person name="Suyama M."/>
            <person name="Bailey J.A."/>
            <person name="Portnoy M.E."/>
            <person name="Torrents D."/>
            <person name="Chinwalla A.T."/>
            <person name="Gish W.R."/>
            <person name="Eddy S.R."/>
            <person name="McPherson J.D."/>
            <person name="Olson M.V."/>
            <person name="Eichler E.E."/>
            <person name="Green E.D."/>
            <person name="Waterston R.H."/>
            <person name="Wilson R.K."/>
        </authorList>
    </citation>
    <scope>NUCLEOTIDE SEQUENCE [LARGE SCALE GENOMIC DNA]</scope>
</reference>
<reference key="5">
    <citation type="submission" date="2005-07" db="EMBL/GenBank/DDBJ databases">
        <authorList>
            <person name="Mural R.J."/>
            <person name="Istrail S."/>
            <person name="Sutton G.G."/>
            <person name="Florea L."/>
            <person name="Halpern A.L."/>
            <person name="Mobarry C.M."/>
            <person name="Lippert R."/>
            <person name="Walenz B."/>
            <person name="Shatkay H."/>
            <person name="Dew I."/>
            <person name="Miller J.R."/>
            <person name="Flanigan M.J."/>
            <person name="Edwards N.J."/>
            <person name="Bolanos R."/>
            <person name="Fasulo D."/>
            <person name="Halldorsson B.V."/>
            <person name="Hannenhalli S."/>
            <person name="Turner R."/>
            <person name="Yooseph S."/>
            <person name="Lu F."/>
            <person name="Nusskern D.R."/>
            <person name="Shue B.C."/>
            <person name="Zheng X.H."/>
            <person name="Zhong F."/>
            <person name="Delcher A.L."/>
            <person name="Huson D.H."/>
            <person name="Kravitz S.A."/>
            <person name="Mouchard L."/>
            <person name="Reinert K."/>
            <person name="Remington K.A."/>
            <person name="Clark A.G."/>
            <person name="Waterman M.S."/>
            <person name="Eichler E.E."/>
            <person name="Adams M.D."/>
            <person name="Hunkapiller M.W."/>
            <person name="Myers E.W."/>
            <person name="Venter J.C."/>
        </authorList>
    </citation>
    <scope>NUCLEOTIDE SEQUENCE [LARGE SCALE GENOMIC DNA]</scope>
</reference>
<reference key="6">
    <citation type="journal article" date="2004" name="Genome Res.">
        <title>The status, quality, and expansion of the NIH full-length cDNA project: the Mammalian Gene Collection (MGC).</title>
        <authorList>
            <consortium name="The MGC Project Team"/>
        </authorList>
    </citation>
    <scope>NUCLEOTIDE SEQUENCE [LARGE SCALE MRNA] (ISOFORM 1)</scope>
    <source>
        <tissue>Uterus</tissue>
    </source>
</reference>
<reference key="7">
    <citation type="journal article" date="2002" name="Cell">
        <title>MICALs, a family of conserved flavoprotein oxidoreductases, function in plexin-mediated axonal repulsion.</title>
        <authorList>
            <person name="Terman J.R."/>
            <person name="Mao T."/>
            <person name="Pasterkamp R.J."/>
            <person name="Yu H.-H."/>
            <person name="Kolodkin A.L."/>
        </authorList>
    </citation>
    <scope>IDENTIFICATION</scope>
</reference>
<reference key="8">
    <citation type="journal article" date="2006" name="Mol. Biol. Cell">
        <title>JRAB/MICAL-L2 is a junctional Rab13-binding protein mediating the endocytic recycling of occludin.</title>
        <authorList>
            <person name="Terai T."/>
            <person name="Nishimura N."/>
            <person name="Kanda I."/>
            <person name="Yasui N."/>
            <person name="Sasaki T."/>
        </authorList>
    </citation>
    <scope>INTERACTION WITH RAB13</scope>
</reference>
<reference key="9">
    <citation type="journal article" date="2008" name="J. Proteome Res.">
        <title>Phosphoproteome of resting human platelets.</title>
        <authorList>
            <person name="Zahedi R.P."/>
            <person name="Lewandrowski U."/>
            <person name="Wiesner J."/>
            <person name="Wortelkamp S."/>
            <person name="Moebius J."/>
            <person name="Schuetz C."/>
            <person name="Walter U."/>
            <person name="Gambaryan S."/>
            <person name="Sickmann A."/>
        </authorList>
    </citation>
    <scope>PHOSPHORYLATION [LARGE SCALE ANALYSIS] AT SER-143</scope>
    <scope>IDENTIFICATION BY MASS SPECTROMETRY [LARGE SCALE ANALYSIS]</scope>
    <source>
        <tissue>Platelet</tissue>
    </source>
</reference>
<reference key="10">
    <citation type="journal article" date="2008" name="Proc. Natl. Acad. Sci. U.S.A.">
        <title>A quantitative atlas of mitotic phosphorylation.</title>
        <authorList>
            <person name="Dephoure N."/>
            <person name="Zhou C."/>
            <person name="Villen J."/>
            <person name="Beausoleil S.A."/>
            <person name="Bakalarski C.E."/>
            <person name="Elledge S.J."/>
            <person name="Gygi S.P."/>
        </authorList>
    </citation>
    <scope>PHOSPHORYLATION [LARGE SCALE ANALYSIS] AT SER-494; SER-649; SER-658 AND SER-660</scope>
    <scope>IDENTIFICATION BY MASS SPECTROMETRY [LARGE SCALE ANALYSIS]</scope>
    <source>
        <tissue>Cervix carcinoma</tissue>
    </source>
</reference>
<reference key="11">
    <citation type="journal article" date="2013" name="Genes Cells">
        <title>Junctional Rab13-binding protein (JRAB) regulates cell spreading via filamins.</title>
        <authorList>
            <person name="Sakane A."/>
            <person name="Alamir Mahmoud Abdallah A."/>
            <person name="Nakano K."/>
            <person name="Honda K."/>
            <person name="Kitamura T."/>
            <person name="Imoto I."/>
            <person name="Matsushita N."/>
            <person name="Sasaki T."/>
        </authorList>
    </citation>
    <scope>INTERACTION WITH FLNA</scope>
</reference>
<reference key="12">
    <citation type="journal article" date="2013" name="J. Proteome Res.">
        <title>Toward a comprehensive characterization of a human cancer cell phosphoproteome.</title>
        <authorList>
            <person name="Zhou H."/>
            <person name="Di Palma S."/>
            <person name="Preisinger C."/>
            <person name="Peng M."/>
            <person name="Polat A.N."/>
            <person name="Heck A.J."/>
            <person name="Mohammed S."/>
        </authorList>
    </citation>
    <scope>PHOSPHORYLATION [LARGE SCALE ANALYSIS] AT SER-110; SER-143; SER-153; SER-249; SER-294; SER-494; SER-504; SER-598 AND SER-649</scope>
    <scope>IDENTIFICATION BY MASS SPECTROMETRY [LARGE SCALE ANALYSIS]</scope>
    <source>
        <tissue>Cervix carcinoma</tissue>
        <tissue>Erythroleukemia</tissue>
    </source>
</reference>
<reference key="13">
    <citation type="journal article" date="2014" name="J. Proteomics">
        <title>An enzyme assisted RP-RPLC approach for in-depth analysis of human liver phosphoproteome.</title>
        <authorList>
            <person name="Bian Y."/>
            <person name="Song C."/>
            <person name="Cheng K."/>
            <person name="Dong M."/>
            <person name="Wang F."/>
            <person name="Huang J."/>
            <person name="Sun D."/>
            <person name="Wang L."/>
            <person name="Ye M."/>
            <person name="Zou H."/>
        </authorList>
    </citation>
    <scope>PHOSPHORYLATION [LARGE SCALE ANALYSIS] AT SER-143; SER-153 AND THR-644</scope>
    <scope>IDENTIFICATION BY MASS SPECTROMETRY [LARGE SCALE ANALYSIS]</scope>
    <source>
        <tissue>Liver</tissue>
    </source>
</reference>